<reference key="1">
    <citation type="submission" date="2006-08" db="EMBL/GenBank/DDBJ databases">
        <title>Complete sequence of Shewanella frigidimarina NCIMB 400.</title>
        <authorList>
            <consortium name="US DOE Joint Genome Institute"/>
            <person name="Copeland A."/>
            <person name="Lucas S."/>
            <person name="Lapidus A."/>
            <person name="Barry K."/>
            <person name="Detter J.C."/>
            <person name="Glavina del Rio T."/>
            <person name="Hammon N."/>
            <person name="Israni S."/>
            <person name="Dalin E."/>
            <person name="Tice H."/>
            <person name="Pitluck S."/>
            <person name="Fredrickson J.K."/>
            <person name="Kolker E."/>
            <person name="McCuel L.A."/>
            <person name="DiChristina T."/>
            <person name="Nealson K.H."/>
            <person name="Newman D."/>
            <person name="Tiedje J.M."/>
            <person name="Zhou J."/>
            <person name="Romine M.F."/>
            <person name="Culley D.E."/>
            <person name="Serres M."/>
            <person name="Chertkov O."/>
            <person name="Brettin T."/>
            <person name="Bruce D."/>
            <person name="Han C."/>
            <person name="Tapia R."/>
            <person name="Gilna P."/>
            <person name="Schmutz J."/>
            <person name="Larimer F."/>
            <person name="Land M."/>
            <person name="Hauser L."/>
            <person name="Kyrpides N."/>
            <person name="Mikhailova N."/>
            <person name="Richardson P."/>
        </authorList>
    </citation>
    <scope>NUCLEOTIDE SEQUENCE [LARGE SCALE GENOMIC DNA]</scope>
    <source>
        <strain>NCIMB 400</strain>
    </source>
</reference>
<name>NDPA_SHEFN</name>
<proteinExistence type="inferred from homology"/>
<comment type="subcellular location">
    <subcellularLocation>
        <location evidence="1">Cytoplasm</location>
        <location evidence="1">Nucleoid</location>
    </subcellularLocation>
</comment>
<comment type="similarity">
    <text evidence="1">Belongs to the YejK family.</text>
</comment>
<dbReference type="EMBL" id="CP000447">
    <property type="protein sequence ID" value="ABI72336.1"/>
    <property type="molecule type" value="Genomic_DNA"/>
</dbReference>
<dbReference type="SMR" id="Q080H9"/>
<dbReference type="STRING" id="318167.Sfri_2491"/>
<dbReference type="KEGG" id="sfr:Sfri_2491"/>
<dbReference type="eggNOG" id="COG3081">
    <property type="taxonomic scope" value="Bacteria"/>
</dbReference>
<dbReference type="HOGENOM" id="CLU_063050_0_1_6"/>
<dbReference type="OrthoDB" id="9131762at2"/>
<dbReference type="Proteomes" id="UP000000684">
    <property type="component" value="Chromosome"/>
</dbReference>
<dbReference type="GO" id="GO:0043590">
    <property type="term" value="C:bacterial nucleoid"/>
    <property type="evidence" value="ECO:0007669"/>
    <property type="project" value="TreeGrafter"/>
</dbReference>
<dbReference type="GO" id="GO:0005737">
    <property type="term" value="C:cytoplasm"/>
    <property type="evidence" value="ECO:0007669"/>
    <property type="project" value="UniProtKB-UniRule"/>
</dbReference>
<dbReference type="GO" id="GO:0003690">
    <property type="term" value="F:double-stranded DNA binding"/>
    <property type="evidence" value="ECO:0007669"/>
    <property type="project" value="TreeGrafter"/>
</dbReference>
<dbReference type="GO" id="GO:0003727">
    <property type="term" value="F:single-stranded RNA binding"/>
    <property type="evidence" value="ECO:0007669"/>
    <property type="project" value="TreeGrafter"/>
</dbReference>
<dbReference type="HAMAP" id="MF_00730">
    <property type="entry name" value="NdpA"/>
    <property type="match status" value="1"/>
</dbReference>
<dbReference type="InterPro" id="IPR007358">
    <property type="entry name" value="Nucleoid_associated_NdpA"/>
</dbReference>
<dbReference type="NCBIfam" id="NF001557">
    <property type="entry name" value="PRK00378.1"/>
    <property type="match status" value="1"/>
</dbReference>
<dbReference type="PANTHER" id="PTHR38772">
    <property type="match status" value="1"/>
</dbReference>
<dbReference type="PANTHER" id="PTHR38772:SF1">
    <property type="entry name" value="NUCLEOID-ASSOCIATED PROTEIN YEJK"/>
    <property type="match status" value="1"/>
</dbReference>
<dbReference type="Pfam" id="PF04245">
    <property type="entry name" value="NA37"/>
    <property type="match status" value="1"/>
</dbReference>
<gene>
    <name type="ordered locus">Sfri_2491</name>
</gene>
<keyword id="KW-0963">Cytoplasm</keyword>
<keyword id="KW-1185">Reference proteome</keyword>
<sequence>MSISIEQAIIHEISQDSQGQMRCRLRPQPLLNTHAVETMLEELHQTYSGKAGKGFGFFGTHGDDGEANSEFSDALTGYRKGDLGFVEFSGQASQLLQQELAKYDFSQGGFLLMSCYTSMTSDYLFVALLSAKSSMTVLDDMELSQNNHLDLNNIQLAARIDLTEWQADKSSRKYISFIRGRAGRKVADFFLDFMGCVEGVNTKAQNKTLIHAVEDFVAGSELTKDERQDCRNKVFEYCSERADAGEVIEVKDLADELADSGMDSFYDFACGGSYELDEEFPADKASLRSLKKFSGTGGGVTLSFDGGHLGERVIYDPISDTILIKGVPANLKDQLDRRLKGE</sequence>
<protein>
    <recommendedName>
        <fullName evidence="1">Nucleoid-associated protein Sfri_2491</fullName>
    </recommendedName>
</protein>
<organism>
    <name type="scientific">Shewanella frigidimarina (strain NCIMB 400)</name>
    <dbReference type="NCBI Taxonomy" id="318167"/>
    <lineage>
        <taxon>Bacteria</taxon>
        <taxon>Pseudomonadati</taxon>
        <taxon>Pseudomonadota</taxon>
        <taxon>Gammaproteobacteria</taxon>
        <taxon>Alteromonadales</taxon>
        <taxon>Shewanellaceae</taxon>
        <taxon>Shewanella</taxon>
    </lineage>
</organism>
<evidence type="ECO:0000255" key="1">
    <source>
        <dbReference type="HAMAP-Rule" id="MF_00730"/>
    </source>
</evidence>
<feature type="chain" id="PRO_1000045945" description="Nucleoid-associated protein Sfri_2491">
    <location>
        <begin position="1"/>
        <end position="342"/>
    </location>
</feature>
<accession>Q080H9</accession>